<feature type="chain" id="PRO_0000167829" description="Type VII secretion system extracellular protein A">
    <location>
        <begin position="1"/>
        <end position="97"/>
    </location>
</feature>
<feature type="coiled-coil region" evidence="3">
    <location>
        <begin position="61"/>
        <end position="93"/>
    </location>
</feature>
<proteinExistence type="inferred from homology"/>
<reference key="1">
    <citation type="journal article" date="2002" name="Lancet">
        <title>Genome and virulence determinants of high virulence community-acquired MRSA.</title>
        <authorList>
            <person name="Baba T."/>
            <person name="Takeuchi F."/>
            <person name="Kuroda M."/>
            <person name="Yuzawa H."/>
            <person name="Aoki K."/>
            <person name="Oguchi A."/>
            <person name="Nagai Y."/>
            <person name="Iwama N."/>
            <person name="Asano K."/>
            <person name="Naimi T."/>
            <person name="Kuroda H."/>
            <person name="Cui L."/>
            <person name="Yamamoto K."/>
            <person name="Hiramatsu K."/>
        </authorList>
    </citation>
    <scope>NUCLEOTIDE SEQUENCE [LARGE SCALE GENOMIC DNA]</scope>
    <source>
        <strain>MW2</strain>
    </source>
</reference>
<evidence type="ECO:0000250" key="1">
    <source>
        <dbReference type="UniProtKB" id="A0A0H2XI99"/>
    </source>
</evidence>
<evidence type="ECO:0000250" key="2">
    <source>
        <dbReference type="UniProtKB" id="P0C046"/>
    </source>
</evidence>
<evidence type="ECO:0000255" key="3"/>
<evidence type="ECO:0000305" key="4"/>
<organism>
    <name type="scientific">Staphylococcus aureus (strain MW2)</name>
    <dbReference type="NCBI Taxonomy" id="196620"/>
    <lineage>
        <taxon>Bacteria</taxon>
        <taxon>Bacillati</taxon>
        <taxon>Bacillota</taxon>
        <taxon>Bacilli</taxon>
        <taxon>Bacillales</taxon>
        <taxon>Staphylococcaceae</taxon>
        <taxon>Staphylococcus</taxon>
    </lineage>
</organism>
<comment type="function">
    <text evidence="1 2">Virulence factor that is important for the establishment of infection in the host. EsxA is required for EsxB synthesis as well as secretion (By similarity). Modulates host cell apoptotic pathways and mediates together with EsxB the release of S.aureus from the host cell. By acting on apoptosis, plays a role in the modulation of dendritic cell-mediated immunity (By similarity).</text>
</comment>
<comment type="subcellular location">
    <subcellularLocation>
        <location evidence="2">Secreted</location>
    </subcellularLocation>
    <text evidence="2">Secreted via the ESAT-6 secretion system (Ess) / type VII secretion system (T7SS).</text>
</comment>
<comment type="similarity">
    <text evidence="4">Belongs to the WXG100 family. sagEsxA-like subfamily.</text>
</comment>
<keyword id="KW-0175">Coiled coil</keyword>
<keyword id="KW-0964">Secreted</keyword>
<keyword id="KW-0843">Virulence</keyword>
<name>ESXA_STAAW</name>
<dbReference type="EMBL" id="BA000033">
    <property type="protein sequence ID" value="BAB94123.1"/>
    <property type="molecule type" value="Genomic_DNA"/>
</dbReference>
<dbReference type="RefSeq" id="WP_001240826.1">
    <property type="nucleotide sequence ID" value="NC_003923.1"/>
</dbReference>
<dbReference type="SMR" id="Q7A1V4"/>
<dbReference type="GeneID" id="98344606"/>
<dbReference type="KEGG" id="sam:MW0258"/>
<dbReference type="HOGENOM" id="CLU_158563_4_0_9"/>
<dbReference type="GO" id="GO:0005576">
    <property type="term" value="C:extracellular region"/>
    <property type="evidence" value="ECO:0007669"/>
    <property type="project" value="UniProtKB-SubCell"/>
</dbReference>
<dbReference type="Gene3D" id="1.10.287.1060">
    <property type="entry name" value="ESAT-6-like"/>
    <property type="match status" value="1"/>
</dbReference>
<dbReference type="InterPro" id="IPR036689">
    <property type="entry name" value="ESAT-6-like_sf"/>
</dbReference>
<dbReference type="InterPro" id="IPR010310">
    <property type="entry name" value="T7SS_ESAT-6-like"/>
</dbReference>
<dbReference type="NCBIfam" id="TIGR03930">
    <property type="entry name" value="WXG100_ESAT6"/>
    <property type="match status" value="1"/>
</dbReference>
<dbReference type="Pfam" id="PF06013">
    <property type="entry name" value="WXG100"/>
    <property type="match status" value="1"/>
</dbReference>
<dbReference type="SUPFAM" id="SSF140453">
    <property type="entry name" value="EsxAB dimer-like"/>
    <property type="match status" value="1"/>
</dbReference>
<accession>Q7A1V4</accession>
<sequence length="97" mass="11036">MAMIKMSPEEIRAKSQSYGQGSDQIRQILSDLTRAQGEIAANWEGQAFSRFEEQFQQLSPKVEKFAQLLEEIKQQLNSTADAVQEQDQQLSNNFGLQ</sequence>
<protein>
    <recommendedName>
        <fullName evidence="2">Type VII secretion system extracellular protein A</fullName>
        <shortName evidence="2">Ess extracellular protein A</shortName>
    </recommendedName>
</protein>
<gene>
    <name evidence="2" type="primary">esxA</name>
    <name type="ordered locus">MW0258</name>
</gene>